<protein>
    <recommendedName>
        <fullName evidence="1">1-deoxy-D-xylulose 5-phosphate reductoisomerase</fullName>
        <shortName evidence="1">DXP reductoisomerase</shortName>
        <ecNumber evidence="1">1.1.1.267</ecNumber>
    </recommendedName>
    <alternativeName>
        <fullName evidence="1">1-deoxyxylulose-5-phosphate reductoisomerase</fullName>
    </alternativeName>
    <alternativeName>
        <fullName evidence="1">2-C-methyl-D-erythritol 4-phosphate synthase</fullName>
    </alternativeName>
</protein>
<organism>
    <name type="scientific">Rippkaea orientalis (strain PCC 8801 / RF-1)</name>
    <name type="common">Cyanothece sp. (strain PCC 8801)</name>
    <dbReference type="NCBI Taxonomy" id="41431"/>
    <lineage>
        <taxon>Bacteria</taxon>
        <taxon>Bacillati</taxon>
        <taxon>Cyanobacteriota</taxon>
        <taxon>Cyanophyceae</taxon>
        <taxon>Oscillatoriophycideae</taxon>
        <taxon>Chroococcales</taxon>
        <taxon>Aphanothecaceae</taxon>
        <taxon>Rippkaea</taxon>
        <taxon>Rippkaea orientalis</taxon>
    </lineage>
</organism>
<comment type="function">
    <text evidence="1">Catalyzes the NADPH-dependent rearrangement and reduction of 1-deoxy-D-xylulose-5-phosphate (DXP) to 2-C-methyl-D-erythritol 4-phosphate (MEP).</text>
</comment>
<comment type="catalytic activity">
    <reaction evidence="1">
        <text>2-C-methyl-D-erythritol 4-phosphate + NADP(+) = 1-deoxy-D-xylulose 5-phosphate + NADPH + H(+)</text>
        <dbReference type="Rhea" id="RHEA:13717"/>
        <dbReference type="ChEBI" id="CHEBI:15378"/>
        <dbReference type="ChEBI" id="CHEBI:57783"/>
        <dbReference type="ChEBI" id="CHEBI:57792"/>
        <dbReference type="ChEBI" id="CHEBI:58262"/>
        <dbReference type="ChEBI" id="CHEBI:58349"/>
        <dbReference type="EC" id="1.1.1.267"/>
    </reaction>
    <physiologicalReaction direction="right-to-left" evidence="1">
        <dbReference type="Rhea" id="RHEA:13719"/>
    </physiologicalReaction>
</comment>
<comment type="cofactor">
    <cofactor evidence="1">
        <name>Mg(2+)</name>
        <dbReference type="ChEBI" id="CHEBI:18420"/>
    </cofactor>
    <cofactor evidence="1">
        <name>Mn(2+)</name>
        <dbReference type="ChEBI" id="CHEBI:29035"/>
    </cofactor>
</comment>
<comment type="pathway">
    <text evidence="1">Isoprenoid biosynthesis; isopentenyl diphosphate biosynthesis via DXP pathway; isopentenyl diphosphate from 1-deoxy-D-xylulose 5-phosphate: step 1/6.</text>
</comment>
<comment type="similarity">
    <text evidence="1">Belongs to the DXR family.</text>
</comment>
<evidence type="ECO:0000255" key="1">
    <source>
        <dbReference type="HAMAP-Rule" id="MF_00183"/>
    </source>
</evidence>
<accession>B7K5G6</accession>
<dbReference type="EC" id="1.1.1.267" evidence="1"/>
<dbReference type="EMBL" id="CP001287">
    <property type="protein sequence ID" value="ACK66699.1"/>
    <property type="molecule type" value="Genomic_DNA"/>
</dbReference>
<dbReference type="RefSeq" id="WP_012595966.1">
    <property type="nucleotide sequence ID" value="NC_011726.1"/>
</dbReference>
<dbReference type="SMR" id="B7K5G6"/>
<dbReference type="STRING" id="41431.PCC8801_2698"/>
<dbReference type="KEGG" id="cyp:PCC8801_2698"/>
<dbReference type="eggNOG" id="COG0743">
    <property type="taxonomic scope" value="Bacteria"/>
</dbReference>
<dbReference type="HOGENOM" id="CLU_035714_4_0_3"/>
<dbReference type="OrthoDB" id="9806546at2"/>
<dbReference type="UniPathway" id="UPA00056">
    <property type="reaction ID" value="UER00092"/>
</dbReference>
<dbReference type="Proteomes" id="UP000008204">
    <property type="component" value="Chromosome"/>
</dbReference>
<dbReference type="GO" id="GO:0030604">
    <property type="term" value="F:1-deoxy-D-xylulose-5-phosphate reductoisomerase activity"/>
    <property type="evidence" value="ECO:0007669"/>
    <property type="project" value="UniProtKB-UniRule"/>
</dbReference>
<dbReference type="GO" id="GO:0030145">
    <property type="term" value="F:manganese ion binding"/>
    <property type="evidence" value="ECO:0007669"/>
    <property type="project" value="TreeGrafter"/>
</dbReference>
<dbReference type="GO" id="GO:0070402">
    <property type="term" value="F:NADPH binding"/>
    <property type="evidence" value="ECO:0007669"/>
    <property type="project" value="InterPro"/>
</dbReference>
<dbReference type="GO" id="GO:0051484">
    <property type="term" value="P:isopentenyl diphosphate biosynthetic process, methylerythritol 4-phosphate pathway involved in terpenoid biosynthetic process"/>
    <property type="evidence" value="ECO:0007669"/>
    <property type="project" value="TreeGrafter"/>
</dbReference>
<dbReference type="FunFam" id="3.40.50.720:FF:000183">
    <property type="entry name" value="1-deoxy-D-xylulose 5-phosphate reductoisomerase, chloroplastic"/>
    <property type="match status" value="1"/>
</dbReference>
<dbReference type="Gene3D" id="1.10.1740.10">
    <property type="match status" value="1"/>
</dbReference>
<dbReference type="Gene3D" id="3.40.50.720">
    <property type="entry name" value="NAD(P)-binding Rossmann-like Domain"/>
    <property type="match status" value="1"/>
</dbReference>
<dbReference type="HAMAP" id="MF_00183">
    <property type="entry name" value="DXP_reductoisom"/>
    <property type="match status" value="1"/>
</dbReference>
<dbReference type="InterPro" id="IPR003821">
    <property type="entry name" value="DXP_reductoisomerase"/>
</dbReference>
<dbReference type="InterPro" id="IPR013644">
    <property type="entry name" value="DXP_reductoisomerase_C"/>
</dbReference>
<dbReference type="InterPro" id="IPR013512">
    <property type="entry name" value="DXP_reductoisomerase_N"/>
</dbReference>
<dbReference type="InterPro" id="IPR026877">
    <property type="entry name" value="DXPR_C"/>
</dbReference>
<dbReference type="InterPro" id="IPR036169">
    <property type="entry name" value="DXPR_C_sf"/>
</dbReference>
<dbReference type="InterPro" id="IPR036291">
    <property type="entry name" value="NAD(P)-bd_dom_sf"/>
</dbReference>
<dbReference type="NCBIfam" id="TIGR00243">
    <property type="entry name" value="Dxr"/>
    <property type="match status" value="1"/>
</dbReference>
<dbReference type="NCBIfam" id="NF009114">
    <property type="entry name" value="PRK12464.1"/>
    <property type="match status" value="1"/>
</dbReference>
<dbReference type="PANTHER" id="PTHR30525">
    <property type="entry name" value="1-DEOXY-D-XYLULOSE 5-PHOSPHATE REDUCTOISOMERASE"/>
    <property type="match status" value="1"/>
</dbReference>
<dbReference type="PANTHER" id="PTHR30525:SF0">
    <property type="entry name" value="1-DEOXY-D-XYLULOSE 5-PHOSPHATE REDUCTOISOMERASE, CHLOROPLASTIC"/>
    <property type="match status" value="1"/>
</dbReference>
<dbReference type="Pfam" id="PF08436">
    <property type="entry name" value="DXP_redisom_C"/>
    <property type="match status" value="1"/>
</dbReference>
<dbReference type="Pfam" id="PF02670">
    <property type="entry name" value="DXP_reductoisom"/>
    <property type="match status" value="1"/>
</dbReference>
<dbReference type="Pfam" id="PF13288">
    <property type="entry name" value="DXPR_C"/>
    <property type="match status" value="1"/>
</dbReference>
<dbReference type="PIRSF" id="PIRSF006205">
    <property type="entry name" value="Dxp_reductismrs"/>
    <property type="match status" value="1"/>
</dbReference>
<dbReference type="SUPFAM" id="SSF69055">
    <property type="entry name" value="1-deoxy-D-xylulose-5-phosphate reductoisomerase, C-terminal domain"/>
    <property type="match status" value="1"/>
</dbReference>
<dbReference type="SUPFAM" id="SSF55347">
    <property type="entry name" value="Glyceraldehyde-3-phosphate dehydrogenase-like, C-terminal domain"/>
    <property type="match status" value="1"/>
</dbReference>
<dbReference type="SUPFAM" id="SSF51735">
    <property type="entry name" value="NAD(P)-binding Rossmann-fold domains"/>
    <property type="match status" value="1"/>
</dbReference>
<name>DXR_RIPO1</name>
<keyword id="KW-0414">Isoprene biosynthesis</keyword>
<keyword id="KW-0464">Manganese</keyword>
<keyword id="KW-0479">Metal-binding</keyword>
<keyword id="KW-0521">NADP</keyword>
<keyword id="KW-0560">Oxidoreductase</keyword>
<keyword id="KW-1185">Reference proteome</keyword>
<sequence length="398" mass="43533">MKKITILGSTGSIGTQTLDIVQQYPDQFQVVGLATRNNGELLAQQIKQFRPEIVAICQESQLNTIKDAIASLDYSPILLTGEAGVVEVARYGDSESVVTGIVGCAGLLPTIAAIEAGKDIALANKETLIAGGPVVLPLVEKHGVKLLPADSEHSAIFQCLQGVPKGGLRRIILTASGGAFRDWPVEQLKFVTVEDAIKHPNWSMGRKITVDSATLMNKGLEVIEAHYLFGLEYDKIDIVIHPQSIIHSLIELQDTSVLAQLGWPDMRLPLLYALSWPERIYTDWEPLDLVKAGSFTFREPDHHKYPCMQLAYAAGRSGGAIPAVLNAANEQAVALFLEEKIAFLEIPKLIEMACDRFTNQNTSTPTLEDILEADRWARQEVIKGSQEIAKGNKIMSLT</sequence>
<reference key="1">
    <citation type="journal article" date="2011" name="MBio">
        <title>Novel metabolic attributes of the genus Cyanothece, comprising a group of unicellular nitrogen-fixing Cyanobacteria.</title>
        <authorList>
            <person name="Bandyopadhyay A."/>
            <person name="Elvitigala T."/>
            <person name="Welsh E."/>
            <person name="Stockel J."/>
            <person name="Liberton M."/>
            <person name="Min H."/>
            <person name="Sherman L.A."/>
            <person name="Pakrasi H.B."/>
        </authorList>
    </citation>
    <scope>NUCLEOTIDE SEQUENCE [LARGE SCALE GENOMIC DNA]</scope>
    <source>
        <strain>PCC 8801 / RF-1</strain>
    </source>
</reference>
<gene>
    <name evidence="1" type="primary">dxr</name>
    <name type="ordered locus">PCC8801_2698</name>
</gene>
<feature type="chain" id="PRO_1000124091" description="1-deoxy-D-xylulose 5-phosphate reductoisomerase">
    <location>
        <begin position="1"/>
        <end position="398"/>
    </location>
</feature>
<feature type="binding site" evidence="1">
    <location>
        <position position="10"/>
    </location>
    <ligand>
        <name>NADPH</name>
        <dbReference type="ChEBI" id="CHEBI:57783"/>
    </ligand>
</feature>
<feature type="binding site" evidence="1">
    <location>
        <position position="11"/>
    </location>
    <ligand>
        <name>NADPH</name>
        <dbReference type="ChEBI" id="CHEBI:57783"/>
    </ligand>
</feature>
<feature type="binding site" evidence="1">
    <location>
        <position position="12"/>
    </location>
    <ligand>
        <name>NADPH</name>
        <dbReference type="ChEBI" id="CHEBI:57783"/>
    </ligand>
</feature>
<feature type="binding site" evidence="1">
    <location>
        <position position="13"/>
    </location>
    <ligand>
        <name>NADPH</name>
        <dbReference type="ChEBI" id="CHEBI:57783"/>
    </ligand>
</feature>
<feature type="binding site" evidence="1">
    <location>
        <position position="38"/>
    </location>
    <ligand>
        <name>NADPH</name>
        <dbReference type="ChEBI" id="CHEBI:57783"/>
    </ligand>
</feature>
<feature type="binding site" evidence="1">
    <location>
        <position position="124"/>
    </location>
    <ligand>
        <name>NADPH</name>
        <dbReference type="ChEBI" id="CHEBI:57783"/>
    </ligand>
</feature>
<feature type="binding site" evidence="1">
    <location>
        <position position="125"/>
    </location>
    <ligand>
        <name>1-deoxy-D-xylulose 5-phosphate</name>
        <dbReference type="ChEBI" id="CHEBI:57792"/>
    </ligand>
</feature>
<feature type="binding site" evidence="1">
    <location>
        <position position="126"/>
    </location>
    <ligand>
        <name>NADPH</name>
        <dbReference type="ChEBI" id="CHEBI:57783"/>
    </ligand>
</feature>
<feature type="binding site" evidence="1">
    <location>
        <position position="150"/>
    </location>
    <ligand>
        <name>Mn(2+)</name>
        <dbReference type="ChEBI" id="CHEBI:29035"/>
    </ligand>
</feature>
<feature type="binding site" evidence="1">
    <location>
        <position position="151"/>
    </location>
    <ligand>
        <name>1-deoxy-D-xylulose 5-phosphate</name>
        <dbReference type="ChEBI" id="CHEBI:57792"/>
    </ligand>
</feature>
<feature type="binding site" evidence="1">
    <location>
        <position position="152"/>
    </location>
    <ligand>
        <name>1-deoxy-D-xylulose 5-phosphate</name>
        <dbReference type="ChEBI" id="CHEBI:57792"/>
    </ligand>
</feature>
<feature type="binding site" evidence="1">
    <location>
        <position position="152"/>
    </location>
    <ligand>
        <name>Mn(2+)</name>
        <dbReference type="ChEBI" id="CHEBI:29035"/>
    </ligand>
</feature>
<feature type="binding site" evidence="1">
    <location>
        <position position="176"/>
    </location>
    <ligand>
        <name>1-deoxy-D-xylulose 5-phosphate</name>
        <dbReference type="ChEBI" id="CHEBI:57792"/>
    </ligand>
</feature>
<feature type="binding site" evidence="1">
    <location>
        <position position="199"/>
    </location>
    <ligand>
        <name>1-deoxy-D-xylulose 5-phosphate</name>
        <dbReference type="ChEBI" id="CHEBI:57792"/>
    </ligand>
</feature>
<feature type="binding site" evidence="1">
    <location>
        <position position="205"/>
    </location>
    <ligand>
        <name>NADPH</name>
        <dbReference type="ChEBI" id="CHEBI:57783"/>
    </ligand>
</feature>
<feature type="binding site" evidence="1">
    <location>
        <position position="212"/>
    </location>
    <ligand>
        <name>1-deoxy-D-xylulose 5-phosphate</name>
        <dbReference type="ChEBI" id="CHEBI:57792"/>
    </ligand>
</feature>
<feature type="binding site" evidence="1">
    <location>
        <position position="217"/>
    </location>
    <ligand>
        <name>1-deoxy-D-xylulose 5-phosphate</name>
        <dbReference type="ChEBI" id="CHEBI:57792"/>
    </ligand>
</feature>
<feature type="binding site" evidence="1">
    <location>
        <position position="218"/>
    </location>
    <ligand>
        <name>1-deoxy-D-xylulose 5-phosphate</name>
        <dbReference type="ChEBI" id="CHEBI:57792"/>
    </ligand>
</feature>
<feature type="binding site" evidence="1">
    <location>
        <position position="221"/>
    </location>
    <ligand>
        <name>1-deoxy-D-xylulose 5-phosphate</name>
        <dbReference type="ChEBI" id="CHEBI:57792"/>
    </ligand>
</feature>
<feature type="binding site" evidence="1">
    <location>
        <position position="221"/>
    </location>
    <ligand>
        <name>Mn(2+)</name>
        <dbReference type="ChEBI" id="CHEBI:29035"/>
    </ligand>
</feature>
<proteinExistence type="inferred from homology"/>